<reference key="1">
    <citation type="journal article" date="1993" name="Biochem. J.">
        <title>Organization and sequences of genes for the subunits of ATP synthase in the thermophilic cyanobacterium Synechococcus 6716.</title>
        <authorList>
            <person name="van Walraven H.S."/>
            <person name="Lutter R."/>
            <person name="Walker J.E."/>
        </authorList>
    </citation>
    <scope>NUCLEOTIDE SEQUENCE [GENOMIC DNA]</scope>
</reference>
<dbReference type="EMBL" id="X70433">
    <property type="protein sequence ID" value="CAA49889.1"/>
    <property type="molecule type" value="Genomic_DNA"/>
</dbReference>
<dbReference type="SMR" id="Q05384"/>
<dbReference type="GO" id="GO:0031676">
    <property type="term" value="C:plasma membrane-derived thylakoid membrane"/>
    <property type="evidence" value="ECO:0007669"/>
    <property type="project" value="UniProtKB-SubCell"/>
</dbReference>
<dbReference type="GO" id="GO:0045259">
    <property type="term" value="C:proton-transporting ATP synthase complex"/>
    <property type="evidence" value="ECO:0007669"/>
    <property type="project" value="UniProtKB-KW"/>
</dbReference>
<dbReference type="GO" id="GO:0005524">
    <property type="term" value="F:ATP binding"/>
    <property type="evidence" value="ECO:0007669"/>
    <property type="project" value="UniProtKB-UniRule"/>
</dbReference>
<dbReference type="GO" id="GO:0046933">
    <property type="term" value="F:proton-transporting ATP synthase activity, rotational mechanism"/>
    <property type="evidence" value="ECO:0007669"/>
    <property type="project" value="UniProtKB-UniRule"/>
</dbReference>
<dbReference type="CDD" id="cd12151">
    <property type="entry name" value="F1-ATPase_gamma"/>
    <property type="match status" value="1"/>
</dbReference>
<dbReference type="FunFam" id="3.40.1380.10:FF:000006">
    <property type="entry name" value="ATP synthase gamma chain"/>
    <property type="match status" value="1"/>
</dbReference>
<dbReference type="FunFam" id="1.10.287.80:FF:000003">
    <property type="entry name" value="ATP synthase gamma chain, chloroplastic"/>
    <property type="match status" value="1"/>
</dbReference>
<dbReference type="FunFam" id="1.10.287.80:FF:000004">
    <property type="entry name" value="ATP synthase gamma chain, chloroplastic"/>
    <property type="match status" value="1"/>
</dbReference>
<dbReference type="Gene3D" id="3.40.1380.10">
    <property type="match status" value="1"/>
</dbReference>
<dbReference type="Gene3D" id="1.10.287.80">
    <property type="entry name" value="ATP synthase, gamma subunit, helix hairpin domain"/>
    <property type="match status" value="2"/>
</dbReference>
<dbReference type="HAMAP" id="MF_00815">
    <property type="entry name" value="ATP_synth_gamma_bact"/>
    <property type="match status" value="1"/>
</dbReference>
<dbReference type="InterPro" id="IPR035968">
    <property type="entry name" value="ATP_synth_F1_ATPase_gsu"/>
</dbReference>
<dbReference type="InterPro" id="IPR000131">
    <property type="entry name" value="ATP_synth_F1_gsu"/>
</dbReference>
<dbReference type="InterPro" id="IPR023632">
    <property type="entry name" value="ATP_synth_F1_gsu_CS"/>
</dbReference>
<dbReference type="NCBIfam" id="TIGR01146">
    <property type="entry name" value="ATPsyn_F1gamma"/>
    <property type="match status" value="1"/>
</dbReference>
<dbReference type="NCBIfam" id="NF004145">
    <property type="entry name" value="PRK05621.1-2"/>
    <property type="match status" value="1"/>
</dbReference>
<dbReference type="PANTHER" id="PTHR11693">
    <property type="entry name" value="ATP SYNTHASE GAMMA CHAIN"/>
    <property type="match status" value="1"/>
</dbReference>
<dbReference type="PANTHER" id="PTHR11693:SF41">
    <property type="entry name" value="ATP SYNTHASE GAMMA CHAIN, CHLOROPLASTIC"/>
    <property type="match status" value="1"/>
</dbReference>
<dbReference type="Pfam" id="PF00231">
    <property type="entry name" value="ATP-synt"/>
    <property type="match status" value="1"/>
</dbReference>
<dbReference type="PRINTS" id="PR00126">
    <property type="entry name" value="ATPASEGAMMA"/>
</dbReference>
<dbReference type="SUPFAM" id="SSF52943">
    <property type="entry name" value="ATP synthase (F1-ATPase), gamma subunit"/>
    <property type="match status" value="1"/>
</dbReference>
<dbReference type="PROSITE" id="PS00153">
    <property type="entry name" value="ATPASE_GAMMA"/>
    <property type="match status" value="1"/>
</dbReference>
<proteinExistence type="inferred from homology"/>
<evidence type="ECO:0000255" key="1">
    <source>
        <dbReference type="HAMAP-Rule" id="MF_00815"/>
    </source>
</evidence>
<keyword id="KW-0066">ATP synthesis</keyword>
<keyword id="KW-0139">CF(1)</keyword>
<keyword id="KW-0375">Hydrogen ion transport</keyword>
<keyword id="KW-0406">Ion transport</keyword>
<keyword id="KW-0472">Membrane</keyword>
<keyword id="KW-0793">Thylakoid</keyword>
<keyword id="KW-0813">Transport</keyword>
<feature type="chain" id="PRO_0000073404" description="ATP synthase gamma chain">
    <location>
        <begin position="1"/>
        <end position="315"/>
    </location>
</feature>
<gene>
    <name evidence="1" type="primary">atpG</name>
    <name evidence="1" type="synonym">atpC</name>
</gene>
<name>ATPG_SYNP1</name>
<organism>
    <name type="scientific">Synechococcus sp. (strain PCC 6716)</name>
    <dbReference type="NCBI Taxonomy" id="32048"/>
    <lineage>
        <taxon>Bacteria</taxon>
        <taxon>Bacillati</taxon>
        <taxon>Cyanobacteriota</taxon>
        <taxon>Cyanophyceae</taxon>
        <taxon>Synechococcales</taxon>
        <taxon>Synechococcaceae</taxon>
        <taxon>Synechococcus</taxon>
    </lineage>
</organism>
<comment type="function">
    <text evidence="1">Produces ATP from ADP in the presence of a proton gradient across the membrane. The gamma chain is believed to be important in regulating ATPase activity and the flow of protons through the CF(0) complex.</text>
</comment>
<comment type="subunit">
    <text evidence="1">F-type ATPases have 2 components, CF(1) - the catalytic core - and CF(0) - the membrane proton channel. CF(1) has five subunits: alpha(3), beta(3), gamma(1), delta(1), epsilon(1). CF(0) has three main subunits: a, b and c.</text>
</comment>
<comment type="subcellular location">
    <subcellularLocation>
        <location evidence="1">Cellular thylakoid membrane</location>
        <topology evidence="1">Peripheral membrane protein</topology>
    </subcellularLocation>
</comment>
<comment type="similarity">
    <text evidence="1">Belongs to the ATPase gamma chain family.</text>
</comment>
<sequence length="315" mass="34942">MPNLKAIRDRIKTIKDTRKITEAMRLVAAAKVRRAQEQVMASRPFADRLAQVLYGLQTRLRFEDANLPLLAKRPVKTVALLVVTGDRGLCGGYNTNVIRRAKERTEELEAEGIKYTLVIVGRKAAQYFQRRDYPIDAVYSGLEQIPSASEAGQIANELLSLFLSETVDRVELIYTKFVSLISSKPVVQTLLPLDPQGLEAADDEIFRLTTRASHLEVNREKVTSNLPALPPDMIFEQDPVQILDALLPLYLSNQLLRALQEAAASELAARMTAMNNASDNAQTLIGTLTLSYNKARQAAITQEILEVVAGAEALR</sequence>
<accession>Q05384</accession>
<protein>
    <recommendedName>
        <fullName evidence="1">ATP synthase gamma chain</fullName>
    </recommendedName>
    <alternativeName>
        <fullName evidence="1">ATP synthase F1 sector gamma subunit</fullName>
    </alternativeName>
    <alternativeName>
        <fullName evidence="1">F-ATPase gamma subunit</fullName>
    </alternativeName>
</protein>